<name>MTNB_BACC1</name>
<feature type="chain" id="PRO_0000357064" description="Methylthioribulose-1-phosphate dehydratase">
    <location>
        <begin position="1"/>
        <end position="212"/>
    </location>
</feature>
<feature type="binding site" evidence="1">
    <location>
        <position position="97"/>
    </location>
    <ligand>
        <name>Zn(2+)</name>
        <dbReference type="ChEBI" id="CHEBI:29105"/>
    </ligand>
</feature>
<feature type="binding site" evidence="1">
    <location>
        <position position="99"/>
    </location>
    <ligand>
        <name>Zn(2+)</name>
        <dbReference type="ChEBI" id="CHEBI:29105"/>
    </ligand>
</feature>
<sequence length="212" mass="23888">MKQLFRQWYDLSEIKKELTTRNWFPATSGNISIKVSHEPLTFLITASGKDKTKTTPDDFLLVDHLGVPVLETELRPSAETILHTHIYNNTNAGCVLHVHTTDNNVITNLYSDAVTLQNQEIIKALDIWEEGATINIPIIENHAHIPTLGENFRKHIQGDSGAVLIRNHGITVWGRDSFDAKKRLEAYEFLFQFHIKLLSIQGGVSNGANSYS</sequence>
<evidence type="ECO:0000255" key="1">
    <source>
        <dbReference type="HAMAP-Rule" id="MF_01677"/>
    </source>
</evidence>
<organism>
    <name type="scientific">Bacillus cereus (strain ATCC 10987 / NRS 248)</name>
    <dbReference type="NCBI Taxonomy" id="222523"/>
    <lineage>
        <taxon>Bacteria</taxon>
        <taxon>Bacillati</taxon>
        <taxon>Bacillota</taxon>
        <taxon>Bacilli</taxon>
        <taxon>Bacillales</taxon>
        <taxon>Bacillaceae</taxon>
        <taxon>Bacillus</taxon>
        <taxon>Bacillus cereus group</taxon>
    </lineage>
</organism>
<reference key="1">
    <citation type="journal article" date="2004" name="Nucleic Acids Res.">
        <title>The genome sequence of Bacillus cereus ATCC 10987 reveals metabolic adaptations and a large plasmid related to Bacillus anthracis pXO1.</title>
        <authorList>
            <person name="Rasko D.A."/>
            <person name="Ravel J."/>
            <person name="Oekstad O.A."/>
            <person name="Helgason E."/>
            <person name="Cer R.Z."/>
            <person name="Jiang L."/>
            <person name="Shores K.A."/>
            <person name="Fouts D.E."/>
            <person name="Tourasse N.J."/>
            <person name="Angiuoli S.V."/>
            <person name="Kolonay J.F."/>
            <person name="Nelson W.C."/>
            <person name="Kolstoe A.-B."/>
            <person name="Fraser C.M."/>
            <person name="Read T.D."/>
        </authorList>
    </citation>
    <scope>NUCLEOTIDE SEQUENCE [LARGE SCALE GENOMIC DNA]</scope>
    <source>
        <strain>ATCC 10987 / NRS 248</strain>
    </source>
</reference>
<protein>
    <recommendedName>
        <fullName evidence="1">Methylthioribulose-1-phosphate dehydratase</fullName>
        <shortName evidence="1">MTRu-1-P dehydratase</shortName>
        <ecNumber evidence="1">4.2.1.109</ecNumber>
    </recommendedName>
</protein>
<accession>Q731R0</accession>
<comment type="function">
    <text evidence="1">Catalyzes the dehydration of methylthioribulose-1-phosphate (MTRu-1-P) into 2,3-diketo-5-methylthiopentyl-1-phosphate (DK-MTP-1-P).</text>
</comment>
<comment type="catalytic activity">
    <reaction evidence="1">
        <text>5-(methylsulfanyl)-D-ribulose 1-phosphate = 5-methylsulfanyl-2,3-dioxopentyl phosphate + H2O</text>
        <dbReference type="Rhea" id="RHEA:15549"/>
        <dbReference type="ChEBI" id="CHEBI:15377"/>
        <dbReference type="ChEBI" id="CHEBI:58548"/>
        <dbReference type="ChEBI" id="CHEBI:58828"/>
        <dbReference type="EC" id="4.2.1.109"/>
    </reaction>
</comment>
<comment type="cofactor">
    <cofactor evidence="1">
        <name>Zn(2+)</name>
        <dbReference type="ChEBI" id="CHEBI:29105"/>
    </cofactor>
    <text evidence="1">Binds 1 zinc ion per subunit.</text>
</comment>
<comment type="pathway">
    <text evidence="1">Amino-acid biosynthesis; L-methionine biosynthesis via salvage pathway; L-methionine from S-methyl-5-thio-alpha-D-ribose 1-phosphate: step 2/6.</text>
</comment>
<comment type="subunit">
    <text evidence="1">Homotetramer.</text>
</comment>
<comment type="similarity">
    <text evidence="1">Belongs to the aldolase class II family. MtnB subfamily.</text>
</comment>
<keyword id="KW-0028">Amino-acid biosynthesis</keyword>
<keyword id="KW-0456">Lyase</keyword>
<keyword id="KW-0479">Metal-binding</keyword>
<keyword id="KW-0486">Methionine biosynthesis</keyword>
<keyword id="KW-0862">Zinc</keyword>
<gene>
    <name evidence="1" type="primary">mtnB</name>
    <name type="ordered locus">BCE_4105</name>
</gene>
<dbReference type="EC" id="4.2.1.109" evidence="1"/>
<dbReference type="EMBL" id="AE017194">
    <property type="protein sequence ID" value="AAS43007.1"/>
    <property type="molecule type" value="Genomic_DNA"/>
</dbReference>
<dbReference type="SMR" id="Q731R0"/>
<dbReference type="KEGG" id="bca:BCE_4105"/>
<dbReference type="HOGENOM" id="CLU_006033_4_1_9"/>
<dbReference type="UniPathway" id="UPA00904">
    <property type="reaction ID" value="UER00875"/>
</dbReference>
<dbReference type="Proteomes" id="UP000002527">
    <property type="component" value="Chromosome"/>
</dbReference>
<dbReference type="GO" id="GO:0005737">
    <property type="term" value="C:cytoplasm"/>
    <property type="evidence" value="ECO:0007669"/>
    <property type="project" value="InterPro"/>
</dbReference>
<dbReference type="GO" id="GO:0046570">
    <property type="term" value="F:methylthioribulose 1-phosphate dehydratase activity"/>
    <property type="evidence" value="ECO:0007669"/>
    <property type="project" value="UniProtKB-UniRule"/>
</dbReference>
<dbReference type="GO" id="GO:0008270">
    <property type="term" value="F:zinc ion binding"/>
    <property type="evidence" value="ECO:0007669"/>
    <property type="project" value="UniProtKB-UniRule"/>
</dbReference>
<dbReference type="GO" id="GO:0019509">
    <property type="term" value="P:L-methionine salvage from methylthioadenosine"/>
    <property type="evidence" value="ECO:0007669"/>
    <property type="project" value="UniProtKB-UniRule"/>
</dbReference>
<dbReference type="FunFam" id="3.40.225.10:FF:000007">
    <property type="entry name" value="Methylthioribulose-1-phosphate dehydratase"/>
    <property type="match status" value="1"/>
</dbReference>
<dbReference type="Gene3D" id="3.40.225.10">
    <property type="entry name" value="Class II aldolase/adducin N-terminal domain"/>
    <property type="match status" value="1"/>
</dbReference>
<dbReference type="HAMAP" id="MF_01677">
    <property type="entry name" value="Salvage_MtnB"/>
    <property type="match status" value="1"/>
</dbReference>
<dbReference type="InterPro" id="IPR001303">
    <property type="entry name" value="Aldolase_II/adducin_N"/>
</dbReference>
<dbReference type="InterPro" id="IPR036409">
    <property type="entry name" value="Aldolase_II/adducin_N_sf"/>
</dbReference>
<dbReference type="InterPro" id="IPR017714">
    <property type="entry name" value="MethylthioRu-1-P_deHdtase_MtnB"/>
</dbReference>
<dbReference type="NCBIfam" id="NF005244">
    <property type="entry name" value="PRK06754.1"/>
    <property type="match status" value="1"/>
</dbReference>
<dbReference type="NCBIfam" id="TIGR03328">
    <property type="entry name" value="salvage_mtnB"/>
    <property type="match status" value="1"/>
</dbReference>
<dbReference type="PANTHER" id="PTHR10640">
    <property type="entry name" value="METHYLTHIORIBULOSE-1-PHOSPHATE DEHYDRATASE"/>
    <property type="match status" value="1"/>
</dbReference>
<dbReference type="PANTHER" id="PTHR10640:SF7">
    <property type="entry name" value="METHYLTHIORIBULOSE-1-PHOSPHATE DEHYDRATASE"/>
    <property type="match status" value="1"/>
</dbReference>
<dbReference type="Pfam" id="PF00596">
    <property type="entry name" value="Aldolase_II"/>
    <property type="match status" value="1"/>
</dbReference>
<dbReference type="SMART" id="SM01007">
    <property type="entry name" value="Aldolase_II"/>
    <property type="match status" value="1"/>
</dbReference>
<dbReference type="SUPFAM" id="SSF53639">
    <property type="entry name" value="AraD/HMP-PK domain-like"/>
    <property type="match status" value="1"/>
</dbReference>
<proteinExistence type="inferred from homology"/>